<protein>
    <recommendedName>
        <fullName evidence="1">Cytochrome c-type biogenesis protein CcmE</fullName>
    </recommendedName>
    <alternativeName>
        <fullName evidence="1">Cytochrome c maturation protein E</fullName>
    </alternativeName>
    <alternativeName>
        <fullName evidence="1">Heme chaperone CcmE</fullName>
    </alternativeName>
</protein>
<comment type="function">
    <text evidence="1">Heme chaperone required for the biogenesis of c-type cytochromes. Transiently binds heme delivered by CcmC and transfers the heme to apo-cytochromes in a process facilitated by CcmF and CcmH.</text>
</comment>
<comment type="subcellular location">
    <subcellularLocation>
        <location evidence="1">Cell inner membrane</location>
        <topology evidence="1">Single-pass type II membrane protein</topology>
        <orientation evidence="1">Periplasmic side</orientation>
    </subcellularLocation>
</comment>
<comment type="similarity">
    <text evidence="1">Belongs to the CcmE/CycJ family.</text>
</comment>
<organism>
    <name type="scientific">Yersinia enterocolitica serotype O:8 / biotype 1B (strain NCTC 13174 / 8081)</name>
    <dbReference type="NCBI Taxonomy" id="393305"/>
    <lineage>
        <taxon>Bacteria</taxon>
        <taxon>Pseudomonadati</taxon>
        <taxon>Pseudomonadota</taxon>
        <taxon>Gammaproteobacteria</taxon>
        <taxon>Enterobacterales</taxon>
        <taxon>Yersiniaceae</taxon>
        <taxon>Yersinia</taxon>
    </lineage>
</organism>
<sequence length="164" mass="18051">MNPRRKSRLYLAVVVLIGIGLTTTLVLYALRSNIDLFYTPGEILQGKGERHEKPEIGQRLRIGGMVMPGSVKRDDKTLEMSFKVYDARGAVTVTYTGILPDLFREGQGVVAQGVFAEGNTINAKEVLAKHDEKYTPPEVKEAMKENHTRPAEAYNSTAAQGNAS</sequence>
<keyword id="KW-0997">Cell inner membrane</keyword>
<keyword id="KW-1003">Cell membrane</keyword>
<keyword id="KW-0201">Cytochrome c-type biogenesis</keyword>
<keyword id="KW-0349">Heme</keyword>
<keyword id="KW-0408">Iron</keyword>
<keyword id="KW-0472">Membrane</keyword>
<keyword id="KW-0479">Metal-binding</keyword>
<keyword id="KW-0735">Signal-anchor</keyword>
<keyword id="KW-0812">Transmembrane</keyword>
<keyword id="KW-1133">Transmembrane helix</keyword>
<name>CCME_YERE8</name>
<gene>
    <name evidence="1" type="primary">ccmE</name>
    <name evidence="1" type="synonym">cycJ</name>
    <name type="ordered locus">YE1267</name>
</gene>
<dbReference type="EMBL" id="AM286415">
    <property type="protein sequence ID" value="CAL11359.1"/>
    <property type="molecule type" value="Genomic_DNA"/>
</dbReference>
<dbReference type="RefSeq" id="WP_005158631.1">
    <property type="nucleotide sequence ID" value="NC_008800.1"/>
</dbReference>
<dbReference type="RefSeq" id="YP_001005588.1">
    <property type="nucleotide sequence ID" value="NC_008800.1"/>
</dbReference>
<dbReference type="SMR" id="A1JJC1"/>
<dbReference type="GeneID" id="31408324"/>
<dbReference type="KEGG" id="yen:YE1267"/>
<dbReference type="PATRIC" id="fig|393305.7.peg.1376"/>
<dbReference type="eggNOG" id="COG2332">
    <property type="taxonomic scope" value="Bacteria"/>
</dbReference>
<dbReference type="HOGENOM" id="CLU_079503_1_0_6"/>
<dbReference type="OrthoDB" id="9793584at2"/>
<dbReference type="Proteomes" id="UP000000642">
    <property type="component" value="Chromosome"/>
</dbReference>
<dbReference type="GO" id="GO:0005886">
    <property type="term" value="C:plasma membrane"/>
    <property type="evidence" value="ECO:0007669"/>
    <property type="project" value="UniProtKB-SubCell"/>
</dbReference>
<dbReference type="GO" id="GO:0020037">
    <property type="term" value="F:heme binding"/>
    <property type="evidence" value="ECO:0007669"/>
    <property type="project" value="InterPro"/>
</dbReference>
<dbReference type="GO" id="GO:0046872">
    <property type="term" value="F:metal ion binding"/>
    <property type="evidence" value="ECO:0007669"/>
    <property type="project" value="UniProtKB-KW"/>
</dbReference>
<dbReference type="GO" id="GO:0017004">
    <property type="term" value="P:cytochrome complex assembly"/>
    <property type="evidence" value="ECO:0007669"/>
    <property type="project" value="UniProtKB-KW"/>
</dbReference>
<dbReference type="FunFam" id="2.40.50.140:FF:000104">
    <property type="entry name" value="Cytochrome c-type biogenesis protein CcmE"/>
    <property type="match status" value="1"/>
</dbReference>
<dbReference type="Gene3D" id="2.40.50.140">
    <property type="entry name" value="Nucleic acid-binding proteins"/>
    <property type="match status" value="1"/>
</dbReference>
<dbReference type="HAMAP" id="MF_01959">
    <property type="entry name" value="CcmE"/>
    <property type="match status" value="1"/>
</dbReference>
<dbReference type="InterPro" id="IPR004329">
    <property type="entry name" value="CcmE"/>
</dbReference>
<dbReference type="InterPro" id="IPR036127">
    <property type="entry name" value="CcmE-like_sf"/>
</dbReference>
<dbReference type="InterPro" id="IPR012340">
    <property type="entry name" value="NA-bd_OB-fold"/>
</dbReference>
<dbReference type="NCBIfam" id="NF009635">
    <property type="entry name" value="PRK13150.1"/>
    <property type="match status" value="1"/>
</dbReference>
<dbReference type="NCBIfam" id="NF009638">
    <property type="entry name" value="PRK13165.1"/>
    <property type="match status" value="1"/>
</dbReference>
<dbReference type="NCBIfam" id="NF009727">
    <property type="entry name" value="PRK13254.1-1"/>
    <property type="match status" value="1"/>
</dbReference>
<dbReference type="NCBIfam" id="NF009729">
    <property type="entry name" value="PRK13254.1-3"/>
    <property type="match status" value="1"/>
</dbReference>
<dbReference type="NCBIfam" id="NF009731">
    <property type="entry name" value="PRK13254.1-5"/>
    <property type="match status" value="1"/>
</dbReference>
<dbReference type="PANTHER" id="PTHR34128">
    <property type="entry name" value="CYTOCHROME C-TYPE BIOGENESIS PROTEIN CCME HOMOLOG, MITOCHONDRIAL"/>
    <property type="match status" value="1"/>
</dbReference>
<dbReference type="PANTHER" id="PTHR34128:SF2">
    <property type="entry name" value="CYTOCHROME C-TYPE BIOGENESIS PROTEIN CCME HOMOLOG, MITOCHONDRIAL"/>
    <property type="match status" value="1"/>
</dbReference>
<dbReference type="Pfam" id="PF03100">
    <property type="entry name" value="CcmE"/>
    <property type="match status" value="1"/>
</dbReference>
<dbReference type="SUPFAM" id="SSF82093">
    <property type="entry name" value="Heme chaperone CcmE"/>
    <property type="match status" value="1"/>
</dbReference>
<reference key="1">
    <citation type="journal article" date="2006" name="PLoS Genet.">
        <title>The complete genome sequence and comparative genome analysis of the high pathogenicity Yersinia enterocolitica strain 8081.</title>
        <authorList>
            <person name="Thomson N.R."/>
            <person name="Howard S."/>
            <person name="Wren B.W."/>
            <person name="Holden M.T.G."/>
            <person name="Crossman L."/>
            <person name="Challis G.L."/>
            <person name="Churcher C."/>
            <person name="Mungall K."/>
            <person name="Brooks K."/>
            <person name="Chillingworth T."/>
            <person name="Feltwell T."/>
            <person name="Abdellah Z."/>
            <person name="Hauser H."/>
            <person name="Jagels K."/>
            <person name="Maddison M."/>
            <person name="Moule S."/>
            <person name="Sanders M."/>
            <person name="Whitehead S."/>
            <person name="Quail M.A."/>
            <person name="Dougan G."/>
            <person name="Parkhill J."/>
            <person name="Prentice M.B."/>
        </authorList>
    </citation>
    <scope>NUCLEOTIDE SEQUENCE [LARGE SCALE GENOMIC DNA]</scope>
    <source>
        <strain>NCTC 13174 / 8081</strain>
    </source>
</reference>
<evidence type="ECO:0000255" key="1">
    <source>
        <dbReference type="HAMAP-Rule" id="MF_01959"/>
    </source>
</evidence>
<evidence type="ECO:0000256" key="2">
    <source>
        <dbReference type="SAM" id="MobiDB-lite"/>
    </source>
</evidence>
<accession>A1JJC1</accession>
<feature type="chain" id="PRO_1000070868" description="Cytochrome c-type biogenesis protein CcmE">
    <location>
        <begin position="1"/>
        <end position="164"/>
    </location>
</feature>
<feature type="topological domain" description="Cytoplasmic" evidence="1">
    <location>
        <begin position="1"/>
        <end position="8"/>
    </location>
</feature>
<feature type="transmembrane region" description="Helical; Signal-anchor for type II membrane protein" evidence="1">
    <location>
        <begin position="9"/>
        <end position="29"/>
    </location>
</feature>
<feature type="topological domain" description="Periplasmic" evidence="1">
    <location>
        <begin position="30"/>
        <end position="164"/>
    </location>
</feature>
<feature type="region of interest" description="Disordered" evidence="2">
    <location>
        <begin position="131"/>
        <end position="164"/>
    </location>
</feature>
<feature type="compositionally biased region" description="Basic and acidic residues" evidence="2">
    <location>
        <begin position="131"/>
        <end position="150"/>
    </location>
</feature>
<feature type="compositionally biased region" description="Polar residues" evidence="2">
    <location>
        <begin position="154"/>
        <end position="164"/>
    </location>
</feature>
<feature type="binding site" description="covalent" evidence="1">
    <location>
        <position position="130"/>
    </location>
    <ligand>
        <name>heme</name>
        <dbReference type="ChEBI" id="CHEBI:30413"/>
    </ligand>
</feature>
<feature type="binding site" description="axial binding residue" evidence="1">
    <location>
        <position position="134"/>
    </location>
    <ligand>
        <name>heme</name>
        <dbReference type="ChEBI" id="CHEBI:30413"/>
    </ligand>
    <ligandPart>
        <name>Fe</name>
        <dbReference type="ChEBI" id="CHEBI:18248"/>
    </ligandPart>
</feature>
<proteinExistence type="inferred from homology"/>